<feature type="chain" id="PRO_1000134771" description="Transcriptional regulator MraZ">
    <location>
        <begin position="1"/>
        <end position="164"/>
    </location>
</feature>
<feature type="domain" description="SpoVT-AbrB 1" evidence="2">
    <location>
        <begin position="7"/>
        <end position="60"/>
    </location>
</feature>
<feature type="domain" description="SpoVT-AbrB 2" evidence="2">
    <location>
        <begin position="83"/>
        <end position="126"/>
    </location>
</feature>
<feature type="region of interest" description="Disordered" evidence="3">
    <location>
        <begin position="141"/>
        <end position="164"/>
    </location>
</feature>
<feature type="compositionally biased region" description="Pro residues" evidence="3">
    <location>
        <begin position="154"/>
        <end position="164"/>
    </location>
</feature>
<protein>
    <recommendedName>
        <fullName>Transcriptional regulator MraZ</fullName>
    </recommendedName>
</protein>
<reference key="1">
    <citation type="journal article" date="2010" name="J. Bacteriol.">
        <title>Complete genome sequence of Beijerinckia indica subsp. indica.</title>
        <authorList>
            <person name="Tamas I."/>
            <person name="Dedysh S.N."/>
            <person name="Liesack W."/>
            <person name="Stott M.B."/>
            <person name="Alam M."/>
            <person name="Murrell J.C."/>
            <person name="Dunfield P.F."/>
        </authorList>
    </citation>
    <scope>NUCLEOTIDE SEQUENCE [LARGE SCALE GENOMIC DNA]</scope>
    <source>
        <strain>ATCC 9039 / DSM 1715 / NCIMB 8712</strain>
    </source>
</reference>
<sequence length="164" mass="18366">MDRFVSHFTNRLDAKGRVSIPASFRAVLARDGFEGLYVHPSIDAEAIDCGGHGLLREIDELLGRLSPYSEERDMFSTALLGTSEILKVDSEGRVVLTENVKTYAGIGSEVTFVGQGYKFQIWEPGRFRTHLEEARNRVRDLRKQLSSRPVAPDAQPPRPHGARE</sequence>
<keyword id="KW-0963">Cytoplasm</keyword>
<keyword id="KW-0238">DNA-binding</keyword>
<keyword id="KW-1185">Reference proteome</keyword>
<keyword id="KW-0677">Repeat</keyword>
<keyword id="KW-0804">Transcription</keyword>
<keyword id="KW-0805">Transcription regulation</keyword>
<comment type="subunit">
    <text evidence="1">Forms oligomers.</text>
</comment>
<comment type="subcellular location">
    <subcellularLocation>
        <location evidence="1">Cytoplasm</location>
        <location evidence="1">Nucleoid</location>
    </subcellularLocation>
</comment>
<comment type="similarity">
    <text evidence="1">Belongs to the MraZ family.</text>
</comment>
<name>MRAZ_BEII9</name>
<accession>B2IGF1</accession>
<organism>
    <name type="scientific">Beijerinckia indica subsp. indica (strain ATCC 9039 / DSM 1715 / NCIMB 8712)</name>
    <dbReference type="NCBI Taxonomy" id="395963"/>
    <lineage>
        <taxon>Bacteria</taxon>
        <taxon>Pseudomonadati</taxon>
        <taxon>Pseudomonadota</taxon>
        <taxon>Alphaproteobacteria</taxon>
        <taxon>Hyphomicrobiales</taxon>
        <taxon>Beijerinckiaceae</taxon>
        <taxon>Beijerinckia</taxon>
    </lineage>
</organism>
<proteinExistence type="inferred from homology"/>
<gene>
    <name evidence="1" type="primary">mraZ</name>
    <name type="ordered locus">Bind_0683</name>
</gene>
<evidence type="ECO:0000255" key="1">
    <source>
        <dbReference type="HAMAP-Rule" id="MF_01008"/>
    </source>
</evidence>
<evidence type="ECO:0000255" key="2">
    <source>
        <dbReference type="PROSITE-ProRule" id="PRU01076"/>
    </source>
</evidence>
<evidence type="ECO:0000256" key="3">
    <source>
        <dbReference type="SAM" id="MobiDB-lite"/>
    </source>
</evidence>
<dbReference type="EMBL" id="CP001016">
    <property type="protein sequence ID" value="ACB94333.1"/>
    <property type="molecule type" value="Genomic_DNA"/>
</dbReference>
<dbReference type="RefSeq" id="WP_012383691.1">
    <property type="nucleotide sequence ID" value="NC_010581.1"/>
</dbReference>
<dbReference type="SMR" id="B2IGF1"/>
<dbReference type="STRING" id="395963.Bind_0683"/>
<dbReference type="KEGG" id="bid:Bind_0683"/>
<dbReference type="eggNOG" id="COG2001">
    <property type="taxonomic scope" value="Bacteria"/>
</dbReference>
<dbReference type="HOGENOM" id="CLU_107907_1_0_5"/>
<dbReference type="OrthoDB" id="9807753at2"/>
<dbReference type="Proteomes" id="UP000001695">
    <property type="component" value="Chromosome"/>
</dbReference>
<dbReference type="GO" id="GO:0005737">
    <property type="term" value="C:cytoplasm"/>
    <property type="evidence" value="ECO:0007669"/>
    <property type="project" value="UniProtKB-UniRule"/>
</dbReference>
<dbReference type="GO" id="GO:0009295">
    <property type="term" value="C:nucleoid"/>
    <property type="evidence" value="ECO:0007669"/>
    <property type="project" value="UniProtKB-SubCell"/>
</dbReference>
<dbReference type="GO" id="GO:0003700">
    <property type="term" value="F:DNA-binding transcription factor activity"/>
    <property type="evidence" value="ECO:0007669"/>
    <property type="project" value="UniProtKB-UniRule"/>
</dbReference>
<dbReference type="GO" id="GO:0000976">
    <property type="term" value="F:transcription cis-regulatory region binding"/>
    <property type="evidence" value="ECO:0007669"/>
    <property type="project" value="TreeGrafter"/>
</dbReference>
<dbReference type="GO" id="GO:2000143">
    <property type="term" value="P:negative regulation of DNA-templated transcription initiation"/>
    <property type="evidence" value="ECO:0007669"/>
    <property type="project" value="TreeGrafter"/>
</dbReference>
<dbReference type="CDD" id="cd16321">
    <property type="entry name" value="MraZ_C"/>
    <property type="match status" value="1"/>
</dbReference>
<dbReference type="CDD" id="cd16320">
    <property type="entry name" value="MraZ_N"/>
    <property type="match status" value="1"/>
</dbReference>
<dbReference type="Gene3D" id="3.40.1550.20">
    <property type="entry name" value="Transcriptional regulator MraZ domain"/>
    <property type="match status" value="1"/>
</dbReference>
<dbReference type="HAMAP" id="MF_01008">
    <property type="entry name" value="MraZ"/>
    <property type="match status" value="1"/>
</dbReference>
<dbReference type="InterPro" id="IPR003444">
    <property type="entry name" value="MraZ"/>
</dbReference>
<dbReference type="InterPro" id="IPR035644">
    <property type="entry name" value="MraZ_C"/>
</dbReference>
<dbReference type="InterPro" id="IPR020603">
    <property type="entry name" value="MraZ_dom"/>
</dbReference>
<dbReference type="InterPro" id="IPR035642">
    <property type="entry name" value="MraZ_N"/>
</dbReference>
<dbReference type="InterPro" id="IPR038619">
    <property type="entry name" value="MraZ_sf"/>
</dbReference>
<dbReference type="InterPro" id="IPR007159">
    <property type="entry name" value="SpoVT-AbrB_dom"/>
</dbReference>
<dbReference type="InterPro" id="IPR037914">
    <property type="entry name" value="SpoVT-AbrB_sf"/>
</dbReference>
<dbReference type="PANTHER" id="PTHR34701">
    <property type="entry name" value="TRANSCRIPTIONAL REGULATOR MRAZ"/>
    <property type="match status" value="1"/>
</dbReference>
<dbReference type="PANTHER" id="PTHR34701:SF1">
    <property type="entry name" value="TRANSCRIPTIONAL REGULATOR MRAZ"/>
    <property type="match status" value="1"/>
</dbReference>
<dbReference type="Pfam" id="PF02381">
    <property type="entry name" value="MraZ"/>
    <property type="match status" value="1"/>
</dbReference>
<dbReference type="SUPFAM" id="SSF89447">
    <property type="entry name" value="AbrB/MazE/MraZ-like"/>
    <property type="match status" value="1"/>
</dbReference>
<dbReference type="PROSITE" id="PS51740">
    <property type="entry name" value="SPOVT_ABRB"/>
    <property type="match status" value="2"/>
</dbReference>